<organism>
    <name type="scientific">Brucella melitensis biotype 1 (strain ATCC 23456 / CCUG 17765 / NCTC 10094 / 16M)</name>
    <dbReference type="NCBI Taxonomy" id="224914"/>
    <lineage>
        <taxon>Bacteria</taxon>
        <taxon>Pseudomonadati</taxon>
        <taxon>Pseudomonadota</taxon>
        <taxon>Alphaproteobacteria</taxon>
        <taxon>Hyphomicrobiales</taxon>
        <taxon>Brucellaceae</taxon>
        <taxon>Brucella/Ochrobactrum group</taxon>
        <taxon>Brucella</taxon>
    </lineage>
</organism>
<sequence>MTQRLRIALIAHDQKKDDMVAFARAHEQALSRYDIVATGTTGGLIQDACPSLNIHRVKSGPLGGDQQIGAMIAEGTVEVLIFFIDPLSPLPHDVDVKALTRLGSVYDIPMALNRATAEKLVRALD</sequence>
<accession>P0A3Q2</accession>
<accession>Q44615</accession>
<feature type="chain" id="PRO_0000178617" description="Methylglyoxal synthase">
    <location>
        <begin position="1"/>
        <end position="125"/>
    </location>
</feature>
<feature type="domain" description="MGS-like" evidence="1">
    <location>
        <begin position="1"/>
        <end position="125"/>
    </location>
</feature>
<feature type="active site" description="Proton donor/acceptor" evidence="1">
    <location>
        <position position="65"/>
    </location>
</feature>
<feature type="binding site" evidence="1">
    <location>
        <position position="12"/>
    </location>
    <ligand>
        <name>substrate</name>
    </ligand>
</feature>
<feature type="binding site" evidence="1">
    <location>
        <position position="16"/>
    </location>
    <ligand>
        <name>substrate</name>
    </ligand>
</feature>
<feature type="binding site" evidence="1">
    <location>
        <begin position="38"/>
        <end position="41"/>
    </location>
    <ligand>
        <name>substrate</name>
    </ligand>
</feature>
<feature type="binding site" evidence="1">
    <location>
        <begin position="59"/>
        <end position="60"/>
    </location>
    <ligand>
        <name>substrate</name>
    </ligand>
</feature>
<feature type="binding site" evidence="1">
    <location>
        <position position="92"/>
    </location>
    <ligand>
        <name>substrate</name>
    </ligand>
</feature>
<reference key="1">
    <citation type="journal article" date="2002" name="Proc. Natl. Acad. Sci. U.S.A.">
        <title>The genome sequence of the facultative intracellular pathogen Brucella melitensis.</title>
        <authorList>
            <person name="DelVecchio V.G."/>
            <person name="Kapatral V."/>
            <person name="Redkar R.J."/>
            <person name="Patra G."/>
            <person name="Mujer C."/>
            <person name="Los T."/>
            <person name="Ivanova N."/>
            <person name="Anderson I."/>
            <person name="Bhattacharyya A."/>
            <person name="Lykidis A."/>
            <person name="Reznik G."/>
            <person name="Jablonski L."/>
            <person name="Larsen N."/>
            <person name="D'Souza M."/>
            <person name="Bernal A."/>
            <person name="Mazur M."/>
            <person name="Goltsman E."/>
            <person name="Selkov E."/>
            <person name="Elzer P.H."/>
            <person name="Hagius S."/>
            <person name="O'Callaghan D."/>
            <person name="Letesson J.-J."/>
            <person name="Haselkorn R."/>
            <person name="Kyrpides N.C."/>
            <person name="Overbeek R."/>
        </authorList>
    </citation>
    <scope>NUCLEOTIDE SEQUENCE [LARGE SCALE GENOMIC DNA]</scope>
    <source>
        <strain>ATCC 23456 / CCUG 17765 / NCTC 10094 / 16M</strain>
    </source>
</reference>
<dbReference type="EC" id="4.2.3.3" evidence="1"/>
<dbReference type="EMBL" id="AE008918">
    <property type="protein sequence ID" value="AAL53493.1"/>
    <property type="molecule type" value="Genomic_DNA"/>
</dbReference>
<dbReference type="PIR" id="AB3541">
    <property type="entry name" value="AB3541"/>
</dbReference>
<dbReference type="RefSeq" id="WP_002965604.1">
    <property type="nucleotide sequence ID" value="NZ_GG703779.1"/>
</dbReference>
<dbReference type="SMR" id="P0A3Q2"/>
<dbReference type="KEGG" id="bme:BMEII0252"/>
<dbReference type="KEGG" id="bmel:DK63_2989"/>
<dbReference type="PATRIC" id="fig|224914.52.peg.3135"/>
<dbReference type="eggNOG" id="COG1803">
    <property type="taxonomic scope" value="Bacteria"/>
</dbReference>
<dbReference type="PhylomeDB" id="P0A3Q2"/>
<dbReference type="Proteomes" id="UP000000419">
    <property type="component" value="Chromosome II"/>
</dbReference>
<dbReference type="GO" id="GO:0005829">
    <property type="term" value="C:cytosol"/>
    <property type="evidence" value="ECO:0007669"/>
    <property type="project" value="TreeGrafter"/>
</dbReference>
<dbReference type="GO" id="GO:0008929">
    <property type="term" value="F:methylglyoxal synthase activity"/>
    <property type="evidence" value="ECO:0007669"/>
    <property type="project" value="UniProtKB-UniRule"/>
</dbReference>
<dbReference type="GO" id="GO:0019242">
    <property type="term" value="P:methylglyoxal biosynthetic process"/>
    <property type="evidence" value="ECO:0007669"/>
    <property type="project" value="UniProtKB-UniRule"/>
</dbReference>
<dbReference type="CDD" id="cd01422">
    <property type="entry name" value="MGS"/>
    <property type="match status" value="1"/>
</dbReference>
<dbReference type="Gene3D" id="3.40.50.1380">
    <property type="entry name" value="Methylglyoxal synthase-like domain"/>
    <property type="match status" value="1"/>
</dbReference>
<dbReference type="HAMAP" id="MF_00549">
    <property type="entry name" value="Methylglyoxal_synth"/>
    <property type="match status" value="1"/>
</dbReference>
<dbReference type="InterPro" id="IPR004363">
    <property type="entry name" value="Methylgl_synth"/>
</dbReference>
<dbReference type="InterPro" id="IPR018148">
    <property type="entry name" value="Methylglyoxal_synth_AS"/>
</dbReference>
<dbReference type="InterPro" id="IPR011607">
    <property type="entry name" value="MGS-like_dom"/>
</dbReference>
<dbReference type="InterPro" id="IPR036914">
    <property type="entry name" value="MGS-like_dom_sf"/>
</dbReference>
<dbReference type="NCBIfam" id="TIGR00160">
    <property type="entry name" value="MGSA"/>
    <property type="match status" value="1"/>
</dbReference>
<dbReference type="NCBIfam" id="NF003559">
    <property type="entry name" value="PRK05234.1"/>
    <property type="match status" value="1"/>
</dbReference>
<dbReference type="PANTHER" id="PTHR30492">
    <property type="entry name" value="METHYLGLYOXAL SYNTHASE"/>
    <property type="match status" value="1"/>
</dbReference>
<dbReference type="PANTHER" id="PTHR30492:SF0">
    <property type="entry name" value="METHYLGLYOXAL SYNTHASE"/>
    <property type="match status" value="1"/>
</dbReference>
<dbReference type="Pfam" id="PF02142">
    <property type="entry name" value="MGS"/>
    <property type="match status" value="1"/>
</dbReference>
<dbReference type="PIRSF" id="PIRSF006614">
    <property type="entry name" value="Methylglyox_syn"/>
    <property type="match status" value="1"/>
</dbReference>
<dbReference type="SMART" id="SM00851">
    <property type="entry name" value="MGS"/>
    <property type="match status" value="1"/>
</dbReference>
<dbReference type="SUPFAM" id="SSF52335">
    <property type="entry name" value="Methylglyoxal synthase-like"/>
    <property type="match status" value="1"/>
</dbReference>
<dbReference type="PROSITE" id="PS01335">
    <property type="entry name" value="METHYLGLYOXAL_SYNTH"/>
    <property type="match status" value="1"/>
</dbReference>
<dbReference type="PROSITE" id="PS51855">
    <property type="entry name" value="MGS"/>
    <property type="match status" value="1"/>
</dbReference>
<proteinExistence type="inferred from homology"/>
<name>MGSA_BRUME</name>
<protein>
    <recommendedName>
        <fullName evidence="1">Methylglyoxal synthase</fullName>
        <shortName evidence="1">MGS</shortName>
        <ecNumber evidence="1">4.2.3.3</ecNumber>
    </recommendedName>
</protein>
<comment type="function">
    <text evidence="1">Catalyzes the formation of methylglyoxal from dihydroxyacetone phosphate.</text>
</comment>
<comment type="catalytic activity">
    <reaction evidence="1">
        <text>dihydroxyacetone phosphate = methylglyoxal + phosphate</text>
        <dbReference type="Rhea" id="RHEA:17937"/>
        <dbReference type="ChEBI" id="CHEBI:17158"/>
        <dbReference type="ChEBI" id="CHEBI:43474"/>
        <dbReference type="ChEBI" id="CHEBI:57642"/>
        <dbReference type="EC" id="4.2.3.3"/>
    </reaction>
</comment>
<comment type="similarity">
    <text evidence="1 2">Belongs to the methylglyoxal synthase family.</text>
</comment>
<evidence type="ECO:0000255" key="1">
    <source>
        <dbReference type="HAMAP-Rule" id="MF_00549"/>
    </source>
</evidence>
<evidence type="ECO:0000305" key="2"/>
<keyword id="KW-0456">Lyase</keyword>
<gene>
    <name evidence="1" type="primary">mgsA</name>
    <name type="ordered locus">BMEII0252</name>
</gene>